<dbReference type="EC" id="6.3.2.4" evidence="2"/>
<dbReference type="EMBL" id="CP000554">
    <property type="protein sequence ID" value="ABM78735.1"/>
    <property type="molecule type" value="Genomic_DNA"/>
</dbReference>
<dbReference type="RefSeq" id="WP_011826616.1">
    <property type="nucleotide sequence ID" value="NC_008820.1"/>
</dbReference>
<dbReference type="SMR" id="A2CB75"/>
<dbReference type="STRING" id="59922.P9303_19931"/>
<dbReference type="KEGG" id="pmf:P9303_19931"/>
<dbReference type="HOGENOM" id="CLU_039268_0_0_3"/>
<dbReference type="BioCyc" id="PMAR59922:G1G80-1734-MONOMER"/>
<dbReference type="UniPathway" id="UPA00219"/>
<dbReference type="Proteomes" id="UP000002274">
    <property type="component" value="Chromosome"/>
</dbReference>
<dbReference type="GO" id="GO:0005829">
    <property type="term" value="C:cytosol"/>
    <property type="evidence" value="ECO:0007669"/>
    <property type="project" value="TreeGrafter"/>
</dbReference>
<dbReference type="GO" id="GO:0005524">
    <property type="term" value="F:ATP binding"/>
    <property type="evidence" value="ECO:0007669"/>
    <property type="project" value="UniProtKB-KW"/>
</dbReference>
<dbReference type="GO" id="GO:0008716">
    <property type="term" value="F:D-alanine-D-alanine ligase activity"/>
    <property type="evidence" value="ECO:0007669"/>
    <property type="project" value="UniProtKB-UniRule"/>
</dbReference>
<dbReference type="GO" id="GO:0046872">
    <property type="term" value="F:metal ion binding"/>
    <property type="evidence" value="ECO:0007669"/>
    <property type="project" value="UniProtKB-KW"/>
</dbReference>
<dbReference type="GO" id="GO:0071555">
    <property type="term" value="P:cell wall organization"/>
    <property type="evidence" value="ECO:0007669"/>
    <property type="project" value="UniProtKB-KW"/>
</dbReference>
<dbReference type="GO" id="GO:0009252">
    <property type="term" value="P:peptidoglycan biosynthetic process"/>
    <property type="evidence" value="ECO:0007669"/>
    <property type="project" value="UniProtKB-UniRule"/>
</dbReference>
<dbReference type="GO" id="GO:0008360">
    <property type="term" value="P:regulation of cell shape"/>
    <property type="evidence" value="ECO:0007669"/>
    <property type="project" value="UniProtKB-KW"/>
</dbReference>
<dbReference type="FunFam" id="3.30.1490.20:FF:000007">
    <property type="entry name" value="D-alanine--D-alanine ligase"/>
    <property type="match status" value="1"/>
</dbReference>
<dbReference type="FunFam" id="3.30.470.20:FF:000008">
    <property type="entry name" value="D-alanine--D-alanine ligase"/>
    <property type="match status" value="1"/>
</dbReference>
<dbReference type="Gene3D" id="3.40.50.20">
    <property type="match status" value="1"/>
</dbReference>
<dbReference type="Gene3D" id="3.30.1490.20">
    <property type="entry name" value="ATP-grasp fold, A domain"/>
    <property type="match status" value="1"/>
</dbReference>
<dbReference type="Gene3D" id="3.30.470.20">
    <property type="entry name" value="ATP-grasp fold, B domain"/>
    <property type="match status" value="1"/>
</dbReference>
<dbReference type="HAMAP" id="MF_00047">
    <property type="entry name" value="Dala_Dala_lig"/>
    <property type="match status" value="1"/>
</dbReference>
<dbReference type="InterPro" id="IPR011761">
    <property type="entry name" value="ATP-grasp"/>
</dbReference>
<dbReference type="InterPro" id="IPR013815">
    <property type="entry name" value="ATP_grasp_subdomain_1"/>
</dbReference>
<dbReference type="InterPro" id="IPR000291">
    <property type="entry name" value="D-Ala_lig_Van_CS"/>
</dbReference>
<dbReference type="InterPro" id="IPR005905">
    <property type="entry name" value="D_ala_D_ala"/>
</dbReference>
<dbReference type="InterPro" id="IPR011095">
    <property type="entry name" value="Dala_Dala_lig_C"/>
</dbReference>
<dbReference type="InterPro" id="IPR011127">
    <property type="entry name" value="Dala_Dala_lig_N"/>
</dbReference>
<dbReference type="InterPro" id="IPR016185">
    <property type="entry name" value="PreATP-grasp_dom_sf"/>
</dbReference>
<dbReference type="NCBIfam" id="TIGR01205">
    <property type="entry name" value="D_ala_D_alaTIGR"/>
    <property type="match status" value="1"/>
</dbReference>
<dbReference type="NCBIfam" id="NF002528">
    <property type="entry name" value="PRK01966.1-4"/>
    <property type="match status" value="1"/>
</dbReference>
<dbReference type="PANTHER" id="PTHR23132">
    <property type="entry name" value="D-ALANINE--D-ALANINE LIGASE"/>
    <property type="match status" value="1"/>
</dbReference>
<dbReference type="PANTHER" id="PTHR23132:SF25">
    <property type="entry name" value="D-ALANINE--D-ALANINE LIGASE A"/>
    <property type="match status" value="1"/>
</dbReference>
<dbReference type="Pfam" id="PF07478">
    <property type="entry name" value="Dala_Dala_lig_C"/>
    <property type="match status" value="1"/>
</dbReference>
<dbReference type="Pfam" id="PF01820">
    <property type="entry name" value="Dala_Dala_lig_N"/>
    <property type="match status" value="1"/>
</dbReference>
<dbReference type="PIRSF" id="PIRSF039102">
    <property type="entry name" value="Ddl/VanB"/>
    <property type="match status" value="1"/>
</dbReference>
<dbReference type="SUPFAM" id="SSF56059">
    <property type="entry name" value="Glutathione synthetase ATP-binding domain-like"/>
    <property type="match status" value="1"/>
</dbReference>
<dbReference type="SUPFAM" id="SSF52440">
    <property type="entry name" value="PreATP-grasp domain"/>
    <property type="match status" value="1"/>
</dbReference>
<dbReference type="PROSITE" id="PS50975">
    <property type="entry name" value="ATP_GRASP"/>
    <property type="match status" value="1"/>
</dbReference>
<dbReference type="PROSITE" id="PS00843">
    <property type="entry name" value="DALA_DALA_LIGASE_1"/>
    <property type="match status" value="1"/>
</dbReference>
<dbReference type="PROSITE" id="PS00844">
    <property type="entry name" value="DALA_DALA_LIGASE_2"/>
    <property type="match status" value="1"/>
</dbReference>
<reference key="1">
    <citation type="journal article" date="2007" name="PLoS Genet.">
        <title>Patterns and implications of gene gain and loss in the evolution of Prochlorococcus.</title>
        <authorList>
            <person name="Kettler G.C."/>
            <person name="Martiny A.C."/>
            <person name="Huang K."/>
            <person name="Zucker J."/>
            <person name="Coleman M.L."/>
            <person name="Rodrigue S."/>
            <person name="Chen F."/>
            <person name="Lapidus A."/>
            <person name="Ferriera S."/>
            <person name="Johnson J."/>
            <person name="Steglich C."/>
            <person name="Church G.M."/>
            <person name="Richardson P."/>
            <person name="Chisholm S.W."/>
        </authorList>
    </citation>
    <scope>NUCLEOTIDE SEQUENCE [LARGE SCALE GENOMIC DNA]</scope>
    <source>
        <strain>MIT 9303</strain>
    </source>
</reference>
<protein>
    <recommendedName>
        <fullName evidence="2">D-alanine--D-alanine ligase</fullName>
        <ecNumber evidence="2">6.3.2.4</ecNumber>
    </recommendedName>
    <alternativeName>
        <fullName evidence="2">D-Ala-D-Ala ligase</fullName>
    </alternativeName>
    <alternativeName>
        <fullName evidence="2">D-alanylalanine synthetase</fullName>
    </alternativeName>
</protein>
<keyword id="KW-0067">ATP-binding</keyword>
<keyword id="KW-0133">Cell shape</keyword>
<keyword id="KW-0961">Cell wall biogenesis/degradation</keyword>
<keyword id="KW-0963">Cytoplasm</keyword>
<keyword id="KW-0436">Ligase</keyword>
<keyword id="KW-0460">Magnesium</keyword>
<keyword id="KW-0464">Manganese</keyword>
<keyword id="KW-0479">Metal-binding</keyword>
<keyword id="KW-0547">Nucleotide-binding</keyword>
<keyword id="KW-0573">Peptidoglycan synthesis</keyword>
<sequence>MPSSRTCVGVVFGGASEEHAVSIRSAITVVGALRSEVNNNRFEVIAIYIDQRGRWWPAGVAEAVLKQGQPAKPEQLSTPLAPQGFTKLPEGSERVQVWYPVLHGPNGEDGTVQGLFTLMGQPFVGSGVLGSALSMDKLAMKAAFAAAGLPQVPYFAVDAADLLDTESRQGVAKNLEAKLKYPCFVKPANLGSSVGISKAQNRNELLIGLDKAASLDRRIVVEQGVSARELECAVLGKRELQTSVVGEICFDADWYDYDTKYSENCSHTLIPAPLPEGVEAQIRTLALQACRCVAAHGMARVDFFYNAARNEIWLNEINTLPGFTSQSMYPMLWEASGVTLEELVSQLVITAGE</sequence>
<accession>A2CB75</accession>
<feature type="chain" id="PRO_1000030480" description="D-alanine--D-alanine ligase">
    <location>
        <begin position="1"/>
        <end position="353"/>
    </location>
</feature>
<feature type="domain" description="ATP-grasp" evidence="2">
    <location>
        <begin position="141"/>
        <end position="349"/>
    </location>
</feature>
<feature type="binding site" evidence="2">
    <location>
        <begin position="176"/>
        <end position="231"/>
    </location>
    <ligand>
        <name>ATP</name>
        <dbReference type="ChEBI" id="CHEBI:30616"/>
    </ligand>
</feature>
<feature type="binding site" evidence="2">
    <location>
        <position position="302"/>
    </location>
    <ligand>
        <name>Mg(2+)</name>
        <dbReference type="ChEBI" id="CHEBI:18420"/>
        <label>1</label>
    </ligand>
</feature>
<feature type="binding site" evidence="2">
    <location>
        <position position="316"/>
    </location>
    <ligand>
        <name>Mg(2+)</name>
        <dbReference type="ChEBI" id="CHEBI:18420"/>
        <label>1</label>
    </ligand>
</feature>
<feature type="binding site" evidence="2">
    <location>
        <position position="316"/>
    </location>
    <ligand>
        <name>Mg(2+)</name>
        <dbReference type="ChEBI" id="CHEBI:18420"/>
        <label>2</label>
    </ligand>
</feature>
<feature type="binding site" evidence="2">
    <location>
        <position position="318"/>
    </location>
    <ligand>
        <name>Mg(2+)</name>
        <dbReference type="ChEBI" id="CHEBI:18420"/>
        <label>2</label>
    </ligand>
</feature>
<comment type="function">
    <text evidence="2">Cell wall formation.</text>
</comment>
<comment type="catalytic activity">
    <reaction evidence="2">
        <text>2 D-alanine + ATP = D-alanyl-D-alanine + ADP + phosphate + H(+)</text>
        <dbReference type="Rhea" id="RHEA:11224"/>
        <dbReference type="ChEBI" id="CHEBI:15378"/>
        <dbReference type="ChEBI" id="CHEBI:30616"/>
        <dbReference type="ChEBI" id="CHEBI:43474"/>
        <dbReference type="ChEBI" id="CHEBI:57416"/>
        <dbReference type="ChEBI" id="CHEBI:57822"/>
        <dbReference type="ChEBI" id="CHEBI:456216"/>
        <dbReference type="EC" id="6.3.2.4"/>
    </reaction>
</comment>
<comment type="cofactor">
    <cofactor evidence="1">
        <name>Mg(2+)</name>
        <dbReference type="ChEBI" id="CHEBI:18420"/>
    </cofactor>
    <cofactor evidence="1">
        <name>Mn(2+)</name>
        <dbReference type="ChEBI" id="CHEBI:29035"/>
    </cofactor>
    <text evidence="1">Binds 2 magnesium or manganese ions per subunit.</text>
</comment>
<comment type="pathway">
    <text evidence="2">Cell wall biogenesis; peptidoglycan biosynthesis.</text>
</comment>
<comment type="subcellular location">
    <subcellularLocation>
        <location evidence="2">Cytoplasm</location>
    </subcellularLocation>
</comment>
<comment type="similarity">
    <text evidence="2">Belongs to the D-alanine--D-alanine ligase family.</text>
</comment>
<gene>
    <name evidence="2" type="primary">ddl</name>
    <name type="ordered locus">P9303_19931</name>
</gene>
<organism>
    <name type="scientific">Prochlorococcus marinus (strain MIT 9303)</name>
    <dbReference type="NCBI Taxonomy" id="59922"/>
    <lineage>
        <taxon>Bacteria</taxon>
        <taxon>Bacillati</taxon>
        <taxon>Cyanobacteriota</taxon>
        <taxon>Cyanophyceae</taxon>
        <taxon>Synechococcales</taxon>
        <taxon>Prochlorococcaceae</taxon>
        <taxon>Prochlorococcus</taxon>
    </lineage>
</organism>
<proteinExistence type="inferred from homology"/>
<evidence type="ECO:0000250" key="1"/>
<evidence type="ECO:0000255" key="2">
    <source>
        <dbReference type="HAMAP-Rule" id="MF_00047"/>
    </source>
</evidence>
<name>DDL_PROM3</name>